<sequence>MHFTATVLLAFGMSMDAFAASIGKGATLHKPKFSEALRTGLIFGAVETLTPLIGWGLGILASKFVLEWNHWIAFVLLIFLGGRMIIEGIRGGSDEDETPLRRHSFWLLVTTAIATSLDAMAVGVGLAFLQVNIIATALAIGCATLIMSTLGMMIGRFIGPMLGKRAEILGGVVLIGIGVQILWTHFHG</sequence>
<dbReference type="EMBL" id="CP000886">
    <property type="protein sequence ID" value="ABX66788.1"/>
    <property type="molecule type" value="Genomic_DNA"/>
</dbReference>
<dbReference type="RefSeq" id="WP_001518359.1">
    <property type="nucleotide sequence ID" value="NC_010102.1"/>
</dbReference>
<dbReference type="KEGG" id="spq:SPAB_01380"/>
<dbReference type="PATRIC" id="fig|1016998.12.peg.1301"/>
<dbReference type="HOGENOM" id="CLU_096410_0_0_6"/>
<dbReference type="Proteomes" id="UP000008556">
    <property type="component" value="Chromosome"/>
</dbReference>
<dbReference type="GO" id="GO:0005886">
    <property type="term" value="C:plasma membrane"/>
    <property type="evidence" value="ECO:0007669"/>
    <property type="project" value="UniProtKB-SubCell"/>
</dbReference>
<dbReference type="GO" id="GO:0005384">
    <property type="term" value="F:manganese ion transmembrane transporter activity"/>
    <property type="evidence" value="ECO:0007669"/>
    <property type="project" value="UniProtKB-UniRule"/>
</dbReference>
<dbReference type="HAMAP" id="MF_01521">
    <property type="entry name" value="MntP_pump"/>
    <property type="match status" value="1"/>
</dbReference>
<dbReference type="InterPro" id="IPR003810">
    <property type="entry name" value="Mntp/YtaF"/>
</dbReference>
<dbReference type="InterPro" id="IPR022929">
    <property type="entry name" value="Put_MntP"/>
</dbReference>
<dbReference type="NCBIfam" id="NF008546">
    <property type="entry name" value="PRK11469.1"/>
    <property type="match status" value="1"/>
</dbReference>
<dbReference type="PANTHER" id="PTHR35529">
    <property type="entry name" value="MANGANESE EFFLUX PUMP MNTP-RELATED"/>
    <property type="match status" value="1"/>
</dbReference>
<dbReference type="PANTHER" id="PTHR35529:SF1">
    <property type="entry name" value="MANGANESE EFFLUX PUMP MNTP-RELATED"/>
    <property type="match status" value="1"/>
</dbReference>
<dbReference type="Pfam" id="PF02659">
    <property type="entry name" value="Mntp"/>
    <property type="match status" value="1"/>
</dbReference>
<name>MNTP_SALPB</name>
<feature type="chain" id="PRO_1000087554" description="Probable manganese efflux pump MntP">
    <location>
        <begin position="1"/>
        <end position="188"/>
    </location>
</feature>
<feature type="transmembrane region" description="Helical" evidence="1">
    <location>
        <begin position="3"/>
        <end position="23"/>
    </location>
</feature>
<feature type="transmembrane region" description="Helical" evidence="1">
    <location>
        <begin position="41"/>
        <end position="61"/>
    </location>
</feature>
<feature type="transmembrane region" description="Helical" evidence="1">
    <location>
        <begin position="66"/>
        <end position="86"/>
    </location>
</feature>
<feature type="transmembrane region" description="Helical" evidence="1">
    <location>
        <begin position="106"/>
        <end position="128"/>
    </location>
</feature>
<feature type="transmembrane region" description="Helical" evidence="1">
    <location>
        <begin position="143"/>
        <end position="163"/>
    </location>
</feature>
<feature type="transmembrane region" description="Helical" evidence="1">
    <location>
        <begin position="168"/>
        <end position="188"/>
    </location>
</feature>
<protein>
    <recommendedName>
        <fullName evidence="1">Probable manganese efflux pump MntP</fullName>
    </recommendedName>
</protein>
<keyword id="KW-0997">Cell inner membrane</keyword>
<keyword id="KW-1003">Cell membrane</keyword>
<keyword id="KW-0406">Ion transport</keyword>
<keyword id="KW-0464">Manganese</keyword>
<keyword id="KW-0472">Membrane</keyword>
<keyword id="KW-0812">Transmembrane</keyword>
<keyword id="KW-1133">Transmembrane helix</keyword>
<keyword id="KW-0813">Transport</keyword>
<evidence type="ECO:0000255" key="1">
    <source>
        <dbReference type="HAMAP-Rule" id="MF_01521"/>
    </source>
</evidence>
<accession>A9MVT2</accession>
<organism>
    <name type="scientific">Salmonella paratyphi B (strain ATCC BAA-1250 / SPB7)</name>
    <dbReference type="NCBI Taxonomy" id="1016998"/>
    <lineage>
        <taxon>Bacteria</taxon>
        <taxon>Pseudomonadati</taxon>
        <taxon>Pseudomonadota</taxon>
        <taxon>Gammaproteobacteria</taxon>
        <taxon>Enterobacterales</taxon>
        <taxon>Enterobacteriaceae</taxon>
        <taxon>Salmonella</taxon>
    </lineage>
</organism>
<reference key="1">
    <citation type="submission" date="2007-11" db="EMBL/GenBank/DDBJ databases">
        <authorList>
            <consortium name="The Salmonella enterica serovar Paratyphi B Genome Sequencing Project"/>
            <person name="McClelland M."/>
            <person name="Sanderson E.K."/>
            <person name="Porwollik S."/>
            <person name="Spieth J."/>
            <person name="Clifton W.S."/>
            <person name="Fulton R."/>
            <person name="Cordes M."/>
            <person name="Wollam A."/>
            <person name="Shah N."/>
            <person name="Pepin K."/>
            <person name="Bhonagiri V."/>
            <person name="Nash W."/>
            <person name="Johnson M."/>
            <person name="Thiruvilangam P."/>
            <person name="Wilson R."/>
        </authorList>
    </citation>
    <scope>NUCLEOTIDE SEQUENCE [LARGE SCALE GENOMIC DNA]</scope>
    <source>
        <strain>ATCC BAA-1250 / SPB7</strain>
    </source>
</reference>
<gene>
    <name evidence="1" type="primary">mntP</name>
    <name type="synonym">yebN</name>
    <name type="ordered locus">SPAB_01380</name>
</gene>
<comment type="function">
    <text evidence="1">Probably functions as a manganese efflux pump.</text>
</comment>
<comment type="subcellular location">
    <subcellularLocation>
        <location evidence="1">Cell inner membrane</location>
        <topology evidence="1">Multi-pass membrane protein</topology>
    </subcellularLocation>
</comment>
<comment type="similarity">
    <text evidence="1">Belongs to the MntP (TC 9.B.29) family.</text>
</comment>
<proteinExistence type="inferred from homology"/>